<protein>
    <recommendedName>
        <fullName evidence="1">Uridine phosphorylase</fullName>
        <shortName evidence="1">UPase</shortName>
        <shortName evidence="1">UrdPase</shortName>
        <ecNumber evidence="4">2.4.2.3</ecNumber>
    </recommendedName>
</protein>
<keyword id="KW-0963">Cytoplasm</keyword>
<keyword id="KW-0328">Glycosyltransferase</keyword>
<keyword id="KW-1185">Reference proteome</keyword>
<keyword id="KW-0808">Transferase</keyword>
<name>UDP_THEKO</name>
<gene>
    <name evidence="1" type="primary">udp</name>
    <name evidence="5" type="ordered locus">TK1479</name>
</gene>
<organism>
    <name type="scientific">Thermococcus kodakarensis (strain ATCC BAA-918 / JCM 12380 / KOD1)</name>
    <name type="common">Pyrococcus kodakaraensis (strain KOD1)</name>
    <dbReference type="NCBI Taxonomy" id="69014"/>
    <lineage>
        <taxon>Archaea</taxon>
        <taxon>Methanobacteriati</taxon>
        <taxon>Methanobacteriota</taxon>
        <taxon>Thermococci</taxon>
        <taxon>Thermococcales</taxon>
        <taxon>Thermococcaceae</taxon>
        <taxon>Thermococcus</taxon>
    </lineage>
</organism>
<comment type="function">
    <text evidence="4">Catalyzes the reversible phosphorylytic cleavage of uridine to uracil and ribose-1-phosphate.</text>
</comment>
<comment type="catalytic activity">
    <reaction evidence="4">
        <text>uridine + phosphate = alpha-D-ribose 1-phosphate + uracil</text>
        <dbReference type="Rhea" id="RHEA:24388"/>
        <dbReference type="ChEBI" id="CHEBI:16704"/>
        <dbReference type="ChEBI" id="CHEBI:17568"/>
        <dbReference type="ChEBI" id="CHEBI:43474"/>
        <dbReference type="ChEBI" id="CHEBI:57720"/>
        <dbReference type="EC" id="2.4.2.3"/>
    </reaction>
</comment>
<comment type="pathway">
    <text evidence="1">Pyrimidine metabolism; UMP biosynthesis via salvage pathway; uracil from uridine (phosphorylase route): step 1/1.</text>
</comment>
<comment type="subcellular location">
    <subcellularLocation>
        <location evidence="1">Cytoplasm</location>
    </subcellularLocation>
</comment>
<comment type="disruption phenotype">
    <text evidence="2">Disruption of the gene results in a complete loss of ribose 1,5-bisphosphate generation from uridine.</text>
</comment>
<comment type="similarity">
    <text evidence="3">Belongs to the PNP/UDP phosphorylase family.</text>
</comment>
<feature type="chain" id="PRO_0000457659" description="Uridine phosphorylase">
    <location>
        <begin position="1"/>
        <end position="277"/>
    </location>
</feature>
<dbReference type="EC" id="2.4.2.3" evidence="4"/>
<dbReference type="EMBL" id="AP006878">
    <property type="protein sequence ID" value="BAD85668.1"/>
    <property type="molecule type" value="Genomic_DNA"/>
</dbReference>
<dbReference type="RefSeq" id="WP_011250430.1">
    <property type="nucleotide sequence ID" value="NC_006624.1"/>
</dbReference>
<dbReference type="SMR" id="Q5JJC1"/>
<dbReference type="STRING" id="69014.TK1479"/>
<dbReference type="EnsemblBacteria" id="BAD85668">
    <property type="protein sequence ID" value="BAD85668"/>
    <property type="gene ID" value="TK1479"/>
</dbReference>
<dbReference type="GeneID" id="78448001"/>
<dbReference type="KEGG" id="tko:TK1479"/>
<dbReference type="PATRIC" id="fig|69014.16.peg.1440"/>
<dbReference type="eggNOG" id="arCOG01324">
    <property type="taxonomic scope" value="Archaea"/>
</dbReference>
<dbReference type="HOGENOM" id="CLU_068457_0_0_2"/>
<dbReference type="InParanoid" id="Q5JJC1"/>
<dbReference type="OrthoDB" id="372263at2157"/>
<dbReference type="PhylomeDB" id="Q5JJC1"/>
<dbReference type="BioCyc" id="MetaCyc:MONOMER-19659"/>
<dbReference type="UniPathway" id="UPA00574">
    <property type="reaction ID" value="UER00633"/>
</dbReference>
<dbReference type="Proteomes" id="UP000000536">
    <property type="component" value="Chromosome"/>
</dbReference>
<dbReference type="GO" id="GO:0005829">
    <property type="term" value="C:cytosol"/>
    <property type="evidence" value="ECO:0000318"/>
    <property type="project" value="GO_Central"/>
</dbReference>
<dbReference type="GO" id="GO:0004850">
    <property type="term" value="F:uridine phosphorylase activity"/>
    <property type="evidence" value="ECO:0007669"/>
    <property type="project" value="UniProtKB-EC"/>
</dbReference>
<dbReference type="GO" id="GO:0009164">
    <property type="term" value="P:nucleoside catabolic process"/>
    <property type="evidence" value="ECO:0007669"/>
    <property type="project" value="UniProtKB-ARBA"/>
</dbReference>
<dbReference type="GO" id="GO:0009166">
    <property type="term" value="P:nucleotide catabolic process"/>
    <property type="evidence" value="ECO:0007669"/>
    <property type="project" value="InterPro"/>
</dbReference>
<dbReference type="GO" id="GO:0044206">
    <property type="term" value="P:UMP salvage"/>
    <property type="evidence" value="ECO:0007669"/>
    <property type="project" value="UniProtKB-UniPathway"/>
</dbReference>
<dbReference type="CDD" id="cd17767">
    <property type="entry name" value="UP_EcUdp-like"/>
    <property type="match status" value="1"/>
</dbReference>
<dbReference type="Gene3D" id="3.40.50.1580">
    <property type="entry name" value="Nucleoside phosphorylase domain"/>
    <property type="match status" value="1"/>
</dbReference>
<dbReference type="InterPro" id="IPR018016">
    <property type="entry name" value="Nucleoside_phosphorylase_CS"/>
</dbReference>
<dbReference type="InterPro" id="IPR000845">
    <property type="entry name" value="Nucleoside_phosphorylase_d"/>
</dbReference>
<dbReference type="InterPro" id="IPR035994">
    <property type="entry name" value="Nucleoside_phosphorylase_sf"/>
</dbReference>
<dbReference type="InterPro" id="IPR010058">
    <property type="entry name" value="Uridine_phosphorylase"/>
</dbReference>
<dbReference type="NCBIfam" id="TIGR01718">
    <property type="entry name" value="Uridine-psphlse"/>
    <property type="match status" value="1"/>
</dbReference>
<dbReference type="PANTHER" id="PTHR43691">
    <property type="entry name" value="URIDINE PHOSPHORYLASE"/>
    <property type="match status" value="1"/>
</dbReference>
<dbReference type="PANTHER" id="PTHR43691:SF13">
    <property type="entry name" value="URIDINE PHOSPHORYLASE"/>
    <property type="match status" value="1"/>
</dbReference>
<dbReference type="Pfam" id="PF01048">
    <property type="entry name" value="PNP_UDP_1"/>
    <property type="match status" value="1"/>
</dbReference>
<dbReference type="SUPFAM" id="SSF53167">
    <property type="entry name" value="Purine and uridine phosphorylases"/>
    <property type="match status" value="1"/>
</dbReference>
<dbReference type="PROSITE" id="PS01232">
    <property type="entry name" value="PNP_UDP_1"/>
    <property type="match status" value="1"/>
</dbReference>
<evidence type="ECO:0000250" key="1">
    <source>
        <dbReference type="UniProtKB" id="P12758"/>
    </source>
</evidence>
<evidence type="ECO:0000269" key="2">
    <source>
    </source>
</evidence>
<evidence type="ECO:0000305" key="3"/>
<evidence type="ECO:0000305" key="4">
    <source>
    </source>
</evidence>
<evidence type="ECO:0000312" key="5">
    <source>
        <dbReference type="EMBL" id="BAD85668.1"/>
    </source>
</evidence>
<reference key="1">
    <citation type="journal article" date="2005" name="Genome Res.">
        <title>Complete genome sequence of the hyperthermophilic archaeon Thermococcus kodakaraensis KOD1 and comparison with Pyrococcus genomes.</title>
        <authorList>
            <person name="Fukui T."/>
            <person name="Atomi H."/>
            <person name="Kanai T."/>
            <person name="Matsumi R."/>
            <person name="Fujiwara S."/>
            <person name="Imanaka T."/>
        </authorList>
    </citation>
    <scope>NUCLEOTIDE SEQUENCE [LARGE SCALE GENOMIC DNA]</scope>
    <source>
        <strain>ATCC BAA-918 / JCM 12380 / KOD1</strain>
    </source>
</reference>
<reference key="2">
    <citation type="journal article" date="2015" name="Nat. Chem. Biol.">
        <title>A pentose bisphosphate pathway for nucleoside degradation in Archaea.</title>
        <authorList>
            <person name="Aono R."/>
            <person name="Sato T."/>
            <person name="Imanaka T."/>
            <person name="Atomi H."/>
        </authorList>
    </citation>
    <scope>FUNCTION</scope>
    <scope>DISRUPTION PHENOTYPE</scope>
    <source>
        <strain>ATCC BAA-918 / JCM 12380 / KOD1</strain>
    </source>
</reference>
<sequence>MVEKFVSAERPQTEEGMQYHIACKPGDVARYVLLPGDPERVPKISSLWDEAREIAFHREYRTHTGKYKGVPISVTSTGIGGPSTAIAIEELAAIGADTFIRVGSTGAIQPGIEIGDLIIAKAAVRLEGTSKQYVRVEYPAVADLEVTLALIEAAESLGVRYHIGITASTDSFYLGQGRPGLNGYFPSFARNLVDDLRQARVTNFEMEAATLYTLANIYGLRAGCVCAVFANRVTNEFGKAGEKEAALVASEAVKILAEWDEEKERAGKRVWHPGMRG</sequence>
<proteinExistence type="inferred from homology"/>
<accession>Q5JJC1</accession>